<evidence type="ECO:0000255" key="1">
    <source>
        <dbReference type="HAMAP-Rule" id="MF_00223"/>
    </source>
</evidence>
<comment type="catalytic activity">
    <reaction evidence="1">
        <text>GTP + H2O = 7,8-dihydroneopterin 3'-triphosphate + formate + H(+)</text>
        <dbReference type="Rhea" id="RHEA:17473"/>
        <dbReference type="ChEBI" id="CHEBI:15377"/>
        <dbReference type="ChEBI" id="CHEBI:15378"/>
        <dbReference type="ChEBI" id="CHEBI:15740"/>
        <dbReference type="ChEBI" id="CHEBI:37565"/>
        <dbReference type="ChEBI" id="CHEBI:58462"/>
        <dbReference type="EC" id="3.5.4.16"/>
    </reaction>
</comment>
<comment type="pathway">
    <text evidence="1">Cofactor biosynthesis; 7,8-dihydroneopterin triphosphate biosynthesis; 7,8-dihydroneopterin triphosphate from GTP: step 1/1.</text>
</comment>
<comment type="subunit">
    <text evidence="1">Homomer.</text>
</comment>
<comment type="similarity">
    <text evidence="1">Belongs to the GTP cyclohydrolase I family.</text>
</comment>
<name>GCH1_SALPB</name>
<proteinExistence type="inferred from homology"/>
<protein>
    <recommendedName>
        <fullName evidence="1">GTP cyclohydrolase 1</fullName>
        <ecNumber evidence="1">3.5.4.16</ecNumber>
    </recommendedName>
    <alternativeName>
        <fullName evidence="1">GTP cyclohydrolase I</fullName>
        <shortName evidence="1">GTP-CH-I</shortName>
    </alternativeName>
</protein>
<gene>
    <name evidence="1" type="primary">folE</name>
    <name type="ordered locus">SPAB_00820</name>
</gene>
<dbReference type="EC" id="3.5.4.16" evidence="1"/>
<dbReference type="EMBL" id="CP000886">
    <property type="protein sequence ID" value="ABX66244.1"/>
    <property type="molecule type" value="Genomic_DNA"/>
</dbReference>
<dbReference type="RefSeq" id="WP_001139611.1">
    <property type="nucleotide sequence ID" value="NC_010102.1"/>
</dbReference>
<dbReference type="SMR" id="A9N6K0"/>
<dbReference type="KEGG" id="spq:SPAB_00820"/>
<dbReference type="PATRIC" id="fig|1016998.12.peg.769"/>
<dbReference type="HOGENOM" id="CLU_049768_3_2_6"/>
<dbReference type="BioCyc" id="SENT1016998:SPAB_RS03380-MONOMER"/>
<dbReference type="UniPathway" id="UPA00848">
    <property type="reaction ID" value="UER00151"/>
</dbReference>
<dbReference type="Proteomes" id="UP000008556">
    <property type="component" value="Chromosome"/>
</dbReference>
<dbReference type="GO" id="GO:0005737">
    <property type="term" value="C:cytoplasm"/>
    <property type="evidence" value="ECO:0007669"/>
    <property type="project" value="TreeGrafter"/>
</dbReference>
<dbReference type="GO" id="GO:0005525">
    <property type="term" value="F:GTP binding"/>
    <property type="evidence" value="ECO:0007669"/>
    <property type="project" value="UniProtKB-KW"/>
</dbReference>
<dbReference type="GO" id="GO:0003934">
    <property type="term" value="F:GTP cyclohydrolase I activity"/>
    <property type="evidence" value="ECO:0007669"/>
    <property type="project" value="UniProtKB-UniRule"/>
</dbReference>
<dbReference type="GO" id="GO:0008270">
    <property type="term" value="F:zinc ion binding"/>
    <property type="evidence" value="ECO:0007669"/>
    <property type="project" value="UniProtKB-UniRule"/>
</dbReference>
<dbReference type="GO" id="GO:0006730">
    <property type="term" value="P:one-carbon metabolic process"/>
    <property type="evidence" value="ECO:0007669"/>
    <property type="project" value="UniProtKB-UniRule"/>
</dbReference>
<dbReference type="GO" id="GO:0006729">
    <property type="term" value="P:tetrahydrobiopterin biosynthetic process"/>
    <property type="evidence" value="ECO:0007669"/>
    <property type="project" value="TreeGrafter"/>
</dbReference>
<dbReference type="GO" id="GO:0046654">
    <property type="term" value="P:tetrahydrofolate biosynthetic process"/>
    <property type="evidence" value="ECO:0007669"/>
    <property type="project" value="UniProtKB-UniRule"/>
</dbReference>
<dbReference type="CDD" id="cd00642">
    <property type="entry name" value="GTP_cyclohydro1"/>
    <property type="match status" value="1"/>
</dbReference>
<dbReference type="FunFam" id="1.10.286.10:FF:000002">
    <property type="entry name" value="GTP cyclohydrolase 1"/>
    <property type="match status" value="1"/>
</dbReference>
<dbReference type="FunFam" id="3.30.1130.10:FF:000001">
    <property type="entry name" value="GTP cyclohydrolase 1"/>
    <property type="match status" value="1"/>
</dbReference>
<dbReference type="Gene3D" id="1.10.286.10">
    <property type="match status" value="1"/>
</dbReference>
<dbReference type="Gene3D" id="3.30.1130.10">
    <property type="match status" value="1"/>
</dbReference>
<dbReference type="HAMAP" id="MF_00223">
    <property type="entry name" value="FolE"/>
    <property type="match status" value="1"/>
</dbReference>
<dbReference type="InterPro" id="IPR043133">
    <property type="entry name" value="GTP-CH-I_C/QueF"/>
</dbReference>
<dbReference type="InterPro" id="IPR043134">
    <property type="entry name" value="GTP-CH-I_N"/>
</dbReference>
<dbReference type="InterPro" id="IPR001474">
    <property type="entry name" value="GTP_CycHdrlase_I"/>
</dbReference>
<dbReference type="InterPro" id="IPR018234">
    <property type="entry name" value="GTP_CycHdrlase_I_CS"/>
</dbReference>
<dbReference type="InterPro" id="IPR020602">
    <property type="entry name" value="GTP_CycHdrlase_I_dom"/>
</dbReference>
<dbReference type="NCBIfam" id="TIGR00063">
    <property type="entry name" value="folE"/>
    <property type="match status" value="1"/>
</dbReference>
<dbReference type="NCBIfam" id="NF006824">
    <property type="entry name" value="PRK09347.1-1"/>
    <property type="match status" value="1"/>
</dbReference>
<dbReference type="NCBIfam" id="NF006825">
    <property type="entry name" value="PRK09347.1-2"/>
    <property type="match status" value="1"/>
</dbReference>
<dbReference type="NCBIfam" id="NF006826">
    <property type="entry name" value="PRK09347.1-3"/>
    <property type="match status" value="1"/>
</dbReference>
<dbReference type="PANTHER" id="PTHR11109:SF7">
    <property type="entry name" value="GTP CYCLOHYDROLASE 1"/>
    <property type="match status" value="1"/>
</dbReference>
<dbReference type="PANTHER" id="PTHR11109">
    <property type="entry name" value="GTP CYCLOHYDROLASE I"/>
    <property type="match status" value="1"/>
</dbReference>
<dbReference type="Pfam" id="PF01227">
    <property type="entry name" value="GTP_cyclohydroI"/>
    <property type="match status" value="1"/>
</dbReference>
<dbReference type="SUPFAM" id="SSF55620">
    <property type="entry name" value="Tetrahydrobiopterin biosynthesis enzymes-like"/>
    <property type="match status" value="1"/>
</dbReference>
<dbReference type="PROSITE" id="PS00859">
    <property type="entry name" value="GTP_CYCLOHYDROL_1_1"/>
    <property type="match status" value="1"/>
</dbReference>
<dbReference type="PROSITE" id="PS00860">
    <property type="entry name" value="GTP_CYCLOHYDROL_1_2"/>
    <property type="match status" value="1"/>
</dbReference>
<organism>
    <name type="scientific">Salmonella paratyphi B (strain ATCC BAA-1250 / SPB7)</name>
    <dbReference type="NCBI Taxonomy" id="1016998"/>
    <lineage>
        <taxon>Bacteria</taxon>
        <taxon>Pseudomonadati</taxon>
        <taxon>Pseudomonadota</taxon>
        <taxon>Gammaproteobacteria</taxon>
        <taxon>Enterobacterales</taxon>
        <taxon>Enterobacteriaceae</taxon>
        <taxon>Salmonella</taxon>
    </lineage>
</organism>
<reference key="1">
    <citation type="submission" date="2007-11" db="EMBL/GenBank/DDBJ databases">
        <authorList>
            <consortium name="The Salmonella enterica serovar Paratyphi B Genome Sequencing Project"/>
            <person name="McClelland M."/>
            <person name="Sanderson E.K."/>
            <person name="Porwollik S."/>
            <person name="Spieth J."/>
            <person name="Clifton W.S."/>
            <person name="Fulton R."/>
            <person name="Cordes M."/>
            <person name="Wollam A."/>
            <person name="Shah N."/>
            <person name="Pepin K."/>
            <person name="Bhonagiri V."/>
            <person name="Nash W."/>
            <person name="Johnson M."/>
            <person name="Thiruvilangam P."/>
            <person name="Wilson R."/>
        </authorList>
    </citation>
    <scope>NUCLEOTIDE SEQUENCE [LARGE SCALE GENOMIC DNA]</scope>
    <source>
        <strain>ATCC BAA-1250 / SPB7</strain>
    </source>
</reference>
<keyword id="KW-0342">GTP-binding</keyword>
<keyword id="KW-0378">Hydrolase</keyword>
<keyword id="KW-0479">Metal-binding</keyword>
<keyword id="KW-0547">Nucleotide-binding</keyword>
<keyword id="KW-0554">One-carbon metabolism</keyword>
<keyword id="KW-0862">Zinc</keyword>
<accession>A9N6K0</accession>
<feature type="chain" id="PRO_1000078149" description="GTP cyclohydrolase 1">
    <location>
        <begin position="1"/>
        <end position="222"/>
    </location>
</feature>
<feature type="binding site" evidence="1">
    <location>
        <position position="111"/>
    </location>
    <ligand>
        <name>Zn(2+)</name>
        <dbReference type="ChEBI" id="CHEBI:29105"/>
    </ligand>
</feature>
<feature type="binding site" evidence="1">
    <location>
        <position position="114"/>
    </location>
    <ligand>
        <name>Zn(2+)</name>
        <dbReference type="ChEBI" id="CHEBI:29105"/>
    </ligand>
</feature>
<feature type="binding site" evidence="1">
    <location>
        <position position="182"/>
    </location>
    <ligand>
        <name>Zn(2+)</name>
        <dbReference type="ChEBI" id="CHEBI:29105"/>
    </ligand>
</feature>
<sequence>MPSLSKEAALVHDALVARGLETPLRPPMDELDNETRKSLIAGHMTEIMQLLNLDLSDDSLMETPHRIAKMYVDEIFAGLDYANFPKITLIENKMKVDEMVTVRDITLTSTCEHHFVTIDGKATVAYIPKDSVIGLSKINRIVQFFAQRPQVQERLTQQILTALQTLLGTNNVAVSIDAVHYCVKARGIRDATSATTTTSLGGLFKSSQNTRQEFLRAVRHHP</sequence>